<geneLocation type="chloroplast"/>
<protein>
    <recommendedName>
        <fullName evidence="1">Photosystem I assembly protein Ycf4</fullName>
    </recommendedName>
</protein>
<sequence>MNWRSEHIWVELLKGSRKRGNFFWACILFLGSLGFLSVGISSYLGKNIISILPSQEILFFPQGVVMSFYGIAGLFISSYLCCTILWNVGSDYDRFDRKEGIVCIFRWEFPGIKRRVFLRFLMRDIQSIRIQVKEGLYPRRILYMEIRGQGIIPLTRTDDQFFTPREIEQKAAELAYFLRVPIEVF</sequence>
<gene>
    <name evidence="1" type="primary">ycf4</name>
</gene>
<proteinExistence type="inferred from homology"/>
<dbReference type="EMBL" id="X62119">
    <property type="protein sequence ID" value="CAA44040.1"/>
    <property type="molecule type" value="Genomic_DNA"/>
</dbReference>
<dbReference type="PIR" id="S17321">
    <property type="entry name" value="S17321"/>
</dbReference>
<dbReference type="GO" id="GO:0009535">
    <property type="term" value="C:chloroplast thylakoid membrane"/>
    <property type="evidence" value="ECO:0007669"/>
    <property type="project" value="UniProtKB-SubCell"/>
</dbReference>
<dbReference type="GO" id="GO:0009522">
    <property type="term" value="C:photosystem I"/>
    <property type="evidence" value="ECO:0007669"/>
    <property type="project" value="InterPro"/>
</dbReference>
<dbReference type="GO" id="GO:0015979">
    <property type="term" value="P:photosynthesis"/>
    <property type="evidence" value="ECO:0007669"/>
    <property type="project" value="UniProtKB-UniRule"/>
</dbReference>
<dbReference type="HAMAP" id="MF_00437">
    <property type="entry name" value="Ycf4"/>
    <property type="match status" value="1"/>
</dbReference>
<dbReference type="InterPro" id="IPR003359">
    <property type="entry name" value="PSI_Ycf4_assembly"/>
</dbReference>
<dbReference type="PANTHER" id="PTHR33288">
    <property type="match status" value="1"/>
</dbReference>
<dbReference type="PANTHER" id="PTHR33288:SF4">
    <property type="entry name" value="PHOTOSYSTEM I ASSEMBLY PROTEIN YCF4"/>
    <property type="match status" value="1"/>
</dbReference>
<dbReference type="Pfam" id="PF02392">
    <property type="entry name" value="Ycf4"/>
    <property type="match status" value="1"/>
</dbReference>
<accession>P25412</accession>
<comment type="function">
    <text evidence="1">Seems to be required for the assembly of the photosystem I complex.</text>
</comment>
<comment type="subcellular location">
    <subcellularLocation>
        <location evidence="1">Plastid</location>
        <location evidence="1">Chloroplast thylakoid membrane</location>
        <topology evidence="1">Multi-pass membrane protein</topology>
    </subcellularLocation>
</comment>
<comment type="similarity">
    <text evidence="1">Belongs to the Ycf4 family.</text>
</comment>
<evidence type="ECO:0000255" key="1">
    <source>
        <dbReference type="HAMAP-Rule" id="MF_00437"/>
    </source>
</evidence>
<feature type="chain" id="PRO_0000217593" description="Photosystem I assembly protein Ycf4">
    <location>
        <begin position="1"/>
        <end position="185"/>
    </location>
</feature>
<feature type="transmembrane region" description="Helical" evidence="1">
    <location>
        <begin position="21"/>
        <end position="43"/>
    </location>
</feature>
<feature type="transmembrane region" description="Helical" evidence="1">
    <location>
        <begin position="68"/>
        <end position="90"/>
    </location>
</feature>
<keyword id="KW-0150">Chloroplast</keyword>
<keyword id="KW-0472">Membrane</keyword>
<keyword id="KW-0602">Photosynthesis</keyword>
<keyword id="KW-0934">Plastid</keyword>
<keyword id="KW-0793">Thylakoid</keyword>
<keyword id="KW-0812">Transmembrane</keyword>
<keyword id="KW-1133">Transmembrane helix</keyword>
<organism>
    <name type="scientific">Aegilops tauschii</name>
    <name type="common">Tausch's goatgrass</name>
    <name type="synonym">Aegilops squarrosa</name>
    <dbReference type="NCBI Taxonomy" id="37682"/>
    <lineage>
        <taxon>Eukaryota</taxon>
        <taxon>Viridiplantae</taxon>
        <taxon>Streptophyta</taxon>
        <taxon>Embryophyta</taxon>
        <taxon>Tracheophyta</taxon>
        <taxon>Spermatophyta</taxon>
        <taxon>Magnoliopsida</taxon>
        <taxon>Liliopsida</taxon>
        <taxon>Poales</taxon>
        <taxon>Poaceae</taxon>
        <taxon>BOP clade</taxon>
        <taxon>Pooideae</taxon>
        <taxon>Triticodae</taxon>
        <taxon>Triticeae</taxon>
        <taxon>Triticinae</taxon>
        <taxon>Aegilops</taxon>
    </lineage>
</organism>
<reference key="1">
    <citation type="journal article" date="1991" name="Genetics">
        <title>Molecular analysis of the hot spot region related to length mutations in wheat chloroplast DNAs. I. Nucleotide divergence of genes and intergenic spacer regions located in the hot spot region.</title>
        <authorList>
            <person name="Ogihara Y."/>
            <person name="Terachi T."/>
            <person name="Sasakuma T."/>
        </authorList>
    </citation>
    <scope>NUCLEOTIDE SEQUENCE [GENOMIC DNA]</scope>
    <source>
        <strain>cv. Typica</strain>
        <tissue>Seedling</tissue>
    </source>
</reference>
<name>YCF4_AEGTA</name>